<reference key="1">
    <citation type="journal article" date="1996" name="J. Biol. Chem.">
        <title>p150TSP, a conserved nuclear phosphoprotein that contains multiple tetratricopeptide repeats and binds specifically to SH2 domains.</title>
        <authorList>
            <person name="Malek S.N."/>
            <person name="Yang C.H."/>
            <person name="Earnshaw W.C."/>
            <person name="Kozak C.A."/>
            <person name="Desiderio S."/>
        </authorList>
    </citation>
    <scope>NUCLEOTIDE SEQUENCE [MRNA] (ISOFORM 1)</scope>
    <scope>SUBCELLULAR LOCATION</scope>
    <scope>PHOSPHORYLATION</scope>
    <source>
        <tissue>Lymphoma</tissue>
    </source>
</reference>
<reference key="2">
    <citation type="journal article" date="2005" name="Science">
        <title>The transcriptional landscape of the mammalian genome.</title>
        <authorList>
            <person name="Carninci P."/>
            <person name="Kasukawa T."/>
            <person name="Katayama S."/>
            <person name="Gough J."/>
            <person name="Frith M.C."/>
            <person name="Maeda N."/>
            <person name="Oyama R."/>
            <person name="Ravasi T."/>
            <person name="Lenhard B."/>
            <person name="Wells C."/>
            <person name="Kodzius R."/>
            <person name="Shimokawa K."/>
            <person name="Bajic V.B."/>
            <person name="Brenner S.E."/>
            <person name="Batalov S."/>
            <person name="Forrest A.R."/>
            <person name="Zavolan M."/>
            <person name="Davis M.J."/>
            <person name="Wilming L.G."/>
            <person name="Aidinis V."/>
            <person name="Allen J.E."/>
            <person name="Ambesi-Impiombato A."/>
            <person name="Apweiler R."/>
            <person name="Aturaliya R.N."/>
            <person name="Bailey T.L."/>
            <person name="Bansal M."/>
            <person name="Baxter L."/>
            <person name="Beisel K.W."/>
            <person name="Bersano T."/>
            <person name="Bono H."/>
            <person name="Chalk A.M."/>
            <person name="Chiu K.P."/>
            <person name="Choudhary V."/>
            <person name="Christoffels A."/>
            <person name="Clutterbuck D.R."/>
            <person name="Crowe M.L."/>
            <person name="Dalla E."/>
            <person name="Dalrymple B.P."/>
            <person name="de Bono B."/>
            <person name="Della Gatta G."/>
            <person name="di Bernardo D."/>
            <person name="Down T."/>
            <person name="Engstrom P."/>
            <person name="Fagiolini M."/>
            <person name="Faulkner G."/>
            <person name="Fletcher C.F."/>
            <person name="Fukushima T."/>
            <person name="Furuno M."/>
            <person name="Futaki S."/>
            <person name="Gariboldi M."/>
            <person name="Georgii-Hemming P."/>
            <person name="Gingeras T.R."/>
            <person name="Gojobori T."/>
            <person name="Green R.E."/>
            <person name="Gustincich S."/>
            <person name="Harbers M."/>
            <person name="Hayashi Y."/>
            <person name="Hensch T.K."/>
            <person name="Hirokawa N."/>
            <person name="Hill D."/>
            <person name="Huminiecki L."/>
            <person name="Iacono M."/>
            <person name="Ikeo K."/>
            <person name="Iwama A."/>
            <person name="Ishikawa T."/>
            <person name="Jakt M."/>
            <person name="Kanapin A."/>
            <person name="Katoh M."/>
            <person name="Kawasawa Y."/>
            <person name="Kelso J."/>
            <person name="Kitamura H."/>
            <person name="Kitano H."/>
            <person name="Kollias G."/>
            <person name="Krishnan S.P."/>
            <person name="Kruger A."/>
            <person name="Kummerfeld S.K."/>
            <person name="Kurochkin I.V."/>
            <person name="Lareau L.F."/>
            <person name="Lazarevic D."/>
            <person name="Lipovich L."/>
            <person name="Liu J."/>
            <person name="Liuni S."/>
            <person name="McWilliam S."/>
            <person name="Madan Babu M."/>
            <person name="Madera M."/>
            <person name="Marchionni L."/>
            <person name="Matsuda H."/>
            <person name="Matsuzawa S."/>
            <person name="Miki H."/>
            <person name="Mignone F."/>
            <person name="Miyake S."/>
            <person name="Morris K."/>
            <person name="Mottagui-Tabar S."/>
            <person name="Mulder N."/>
            <person name="Nakano N."/>
            <person name="Nakauchi H."/>
            <person name="Ng P."/>
            <person name="Nilsson R."/>
            <person name="Nishiguchi S."/>
            <person name="Nishikawa S."/>
            <person name="Nori F."/>
            <person name="Ohara O."/>
            <person name="Okazaki Y."/>
            <person name="Orlando V."/>
            <person name="Pang K.C."/>
            <person name="Pavan W.J."/>
            <person name="Pavesi G."/>
            <person name="Pesole G."/>
            <person name="Petrovsky N."/>
            <person name="Piazza S."/>
            <person name="Reed J."/>
            <person name="Reid J.F."/>
            <person name="Ring B.Z."/>
            <person name="Ringwald M."/>
            <person name="Rost B."/>
            <person name="Ruan Y."/>
            <person name="Salzberg S.L."/>
            <person name="Sandelin A."/>
            <person name="Schneider C."/>
            <person name="Schoenbach C."/>
            <person name="Sekiguchi K."/>
            <person name="Semple C.A."/>
            <person name="Seno S."/>
            <person name="Sessa L."/>
            <person name="Sheng Y."/>
            <person name="Shibata Y."/>
            <person name="Shimada H."/>
            <person name="Shimada K."/>
            <person name="Silva D."/>
            <person name="Sinclair B."/>
            <person name="Sperling S."/>
            <person name="Stupka E."/>
            <person name="Sugiura K."/>
            <person name="Sultana R."/>
            <person name="Takenaka Y."/>
            <person name="Taki K."/>
            <person name="Tammoja K."/>
            <person name="Tan S.L."/>
            <person name="Tang S."/>
            <person name="Taylor M.S."/>
            <person name="Tegner J."/>
            <person name="Teichmann S.A."/>
            <person name="Ueda H.R."/>
            <person name="van Nimwegen E."/>
            <person name="Verardo R."/>
            <person name="Wei C.L."/>
            <person name="Yagi K."/>
            <person name="Yamanishi H."/>
            <person name="Zabarovsky E."/>
            <person name="Zhu S."/>
            <person name="Zimmer A."/>
            <person name="Hide W."/>
            <person name="Bult C."/>
            <person name="Grimmond S.M."/>
            <person name="Teasdale R.D."/>
            <person name="Liu E.T."/>
            <person name="Brusic V."/>
            <person name="Quackenbush J."/>
            <person name="Wahlestedt C."/>
            <person name="Mattick J.S."/>
            <person name="Hume D.A."/>
            <person name="Kai C."/>
            <person name="Sasaki D."/>
            <person name="Tomaru Y."/>
            <person name="Fukuda S."/>
            <person name="Kanamori-Katayama M."/>
            <person name="Suzuki M."/>
            <person name="Aoki J."/>
            <person name="Arakawa T."/>
            <person name="Iida J."/>
            <person name="Imamura K."/>
            <person name="Itoh M."/>
            <person name="Kato T."/>
            <person name="Kawaji H."/>
            <person name="Kawagashira N."/>
            <person name="Kawashima T."/>
            <person name="Kojima M."/>
            <person name="Kondo S."/>
            <person name="Konno H."/>
            <person name="Nakano K."/>
            <person name="Ninomiya N."/>
            <person name="Nishio T."/>
            <person name="Okada M."/>
            <person name="Plessy C."/>
            <person name="Shibata K."/>
            <person name="Shiraki T."/>
            <person name="Suzuki S."/>
            <person name="Tagami M."/>
            <person name="Waki K."/>
            <person name="Watahiki A."/>
            <person name="Okamura-Oho Y."/>
            <person name="Suzuki H."/>
            <person name="Kawai J."/>
            <person name="Hayashizaki Y."/>
        </authorList>
    </citation>
    <scope>NUCLEOTIDE SEQUENCE [MRNA] (ISOFORM 2)</scope>
    <scope>NUCLEOTIDE SEQUENCE [LARGE SCALE MRNA] OF 1-955 (ISOFORM 1)</scope>
    <source>
        <strain>C57BL/6J</strain>
        <tissue>Olfactory bulb</tissue>
        <tissue>Pancreas</tissue>
        <tissue>Spinal ganglion</tissue>
        <tissue>Thymus</tissue>
    </source>
</reference>
<reference key="3">
    <citation type="journal article" date="2004" name="Genome Res.">
        <title>The status, quality, and expansion of the NIH full-length cDNA project: the Mammalian Gene Collection (MGC).</title>
        <authorList>
            <consortium name="The MGC Project Team"/>
        </authorList>
    </citation>
    <scope>NUCLEOTIDE SEQUENCE [LARGE SCALE MRNA] OF 1-936 (ISOFORM 1)</scope>
    <source>
        <strain>129</strain>
        <strain>C3H/He</strain>
        <tissue>Mammary tumor</tissue>
        <tissue>Osteoblast</tissue>
    </source>
</reference>
<reference key="4">
    <citation type="journal article" date="2002" name="DNA Res.">
        <title>Prediction of the coding sequences of mouse homologues of KIAA gene: I. The complete nucleotide sequences of 100 mouse KIAA-homologous cDNAs identified by screening of terminal sequences of cDNA clones randomly sampled from size-fractionated libraries.</title>
        <authorList>
            <person name="Okazaki N."/>
            <person name="Kikuno R."/>
            <person name="Ohara R."/>
            <person name="Inamoto S."/>
            <person name="Hara Y."/>
            <person name="Nagase T."/>
            <person name="Ohara O."/>
            <person name="Koga H."/>
        </authorList>
    </citation>
    <scope>NUCLEOTIDE SEQUENCE [LARGE SCALE MRNA] OF 705-1173 (ISOFORM 3)</scope>
    <scope>TISSUE SPECIFICITY</scope>
    <source>
        <tissue>Brain</tissue>
    </source>
</reference>
<reference key="5">
    <citation type="journal article" date="2004" name="Mol. Cell. Proteomics">
        <title>Phosphoproteomic analysis of the developing mouse brain.</title>
        <authorList>
            <person name="Ballif B.A."/>
            <person name="Villen J."/>
            <person name="Beausoleil S.A."/>
            <person name="Schwartz D."/>
            <person name="Gygi S.P."/>
        </authorList>
    </citation>
    <scope>PHOSPHORYLATION [LARGE SCALE ANALYSIS] AT THR-925</scope>
    <scope>IDENTIFICATION BY MASS SPECTROMETRY [LARGE SCALE ANALYSIS]</scope>
    <source>
        <tissue>Embryonic brain</tissue>
    </source>
</reference>
<reference key="6">
    <citation type="journal article" date="2007" name="J. Biol. Chem.">
        <title>hCTR9, a component of Paf1 complex, participates in the transcription of interleukin 6-responsive genes through regulation of STAT3-DNA interactions.</title>
        <authorList>
            <person name="Youn M.Y."/>
            <person name="Yoo H.S."/>
            <person name="Kim M.J."/>
            <person name="Hwang S.Y."/>
            <person name="Choi Y."/>
            <person name="Desiderio S.V."/>
            <person name="Yoo J.Y."/>
        </authorList>
    </citation>
    <scope>FUNCTION</scope>
    <scope>INTERACTION WITH STAT3</scope>
</reference>
<reference key="7">
    <citation type="journal article" date="2007" name="Proc. Natl. Acad. Sci. U.S.A.">
        <title>Large-scale phosphorylation analysis of mouse liver.</title>
        <authorList>
            <person name="Villen J."/>
            <person name="Beausoleil S.A."/>
            <person name="Gerber S.A."/>
            <person name="Gygi S.P."/>
        </authorList>
    </citation>
    <scope>PHOSPHORYLATION [LARGE SCALE ANALYSIS] AT THR-925</scope>
    <scope>IDENTIFICATION BY MASS SPECTROMETRY [LARGE SCALE ANALYSIS]</scope>
    <source>
        <tissue>Liver</tissue>
    </source>
</reference>
<reference key="8">
    <citation type="journal article" date="2009" name="Cell Stem Cell">
        <title>A genome-scale RNAi screen for Oct4 modulators defines a role of the Paf1 complex for embryonic stem cell identity.</title>
        <authorList>
            <person name="Ding L."/>
            <person name="Paszkowski-Rogacz M."/>
            <person name="Nitzsche A."/>
            <person name="Slabicki M.M."/>
            <person name="Heninger A.K."/>
            <person name="de Vries I."/>
            <person name="Kittler R."/>
            <person name="Junqueira M."/>
            <person name="Shevchenko A."/>
            <person name="Schulz H."/>
            <person name="Hubner N."/>
            <person name="Doss M.X."/>
            <person name="Sachinidis A."/>
            <person name="Hescheler J."/>
            <person name="Iacone R."/>
            <person name="Anastassiadis K."/>
            <person name="Stewart A.F."/>
            <person name="Pisabarro M.T."/>
            <person name="Caldarelli A."/>
            <person name="Poser I."/>
            <person name="Theis M."/>
            <person name="Buchholz F."/>
        </authorList>
    </citation>
    <scope>FUNCTION</scope>
</reference>
<reference key="9">
    <citation type="journal article" date="2009" name="Mol. Cell. Proteomics">
        <title>Large scale localization of protein phosphorylation by use of electron capture dissociation mass spectrometry.</title>
        <authorList>
            <person name="Sweet S.M."/>
            <person name="Bailey C.M."/>
            <person name="Cunningham D.L."/>
            <person name="Heath J.K."/>
            <person name="Cooper H.J."/>
        </authorList>
    </citation>
    <scope>PHOSPHORYLATION [LARGE SCALE ANALYSIS] AT THR-925</scope>
    <scope>IDENTIFICATION BY MASS SPECTROMETRY [LARGE SCALE ANALYSIS]</scope>
    <source>
        <tissue>Embryonic fibroblast</tissue>
    </source>
</reference>
<reference key="10">
    <citation type="journal article" date="2010" name="Cell">
        <title>A tissue-specific atlas of mouse protein phosphorylation and expression.</title>
        <authorList>
            <person name="Huttlin E.L."/>
            <person name="Jedrychowski M.P."/>
            <person name="Elias J.E."/>
            <person name="Goswami T."/>
            <person name="Rad R."/>
            <person name="Beausoleil S.A."/>
            <person name="Villen J."/>
            <person name="Haas W."/>
            <person name="Sowa M.E."/>
            <person name="Gygi S.P."/>
        </authorList>
    </citation>
    <scope>PHOSPHORYLATION [LARGE SCALE ANALYSIS] AT THR-925; SER-941; SER-970; SER-1037; SER-1039; SER-1041; SER-1079; SER-1083 AND SER-1085</scope>
    <scope>IDENTIFICATION BY MASS SPECTROMETRY [LARGE SCALE ANALYSIS]</scope>
    <source>
        <tissue>Brain</tissue>
        <tissue>Brown adipose tissue</tissue>
        <tissue>Heart</tissue>
        <tissue>Kidney</tissue>
        <tissue>Liver</tissue>
        <tissue>Lung</tissue>
        <tissue>Pancreas</tissue>
        <tissue>Spleen</tissue>
        <tissue>Testis</tissue>
    </source>
</reference>
<reference key="11">
    <citation type="journal article" date="2016" name="Development">
        <title>Setd5 is essential for mammalian development and the co-transcriptional regulation of histone acetylation.</title>
        <authorList>
            <person name="Osipovich A.B."/>
            <person name="Gangula R."/>
            <person name="Vianna P.G."/>
            <person name="Magnuson M.A."/>
        </authorList>
    </citation>
    <scope>INTERACTION WITH SETD5</scope>
</reference>
<reference key="12">
    <citation type="journal article" date="2016" name="Nat. Cell Biol.">
        <title>Regulation of transcriptional elongation in pluripotency and cell differentiation by the PHD-finger protein Phf5a.</title>
        <authorList>
            <person name="Strikoudis A."/>
            <person name="Lazaris C."/>
            <person name="Trimarchi T."/>
            <person name="Galvao Neto A.L."/>
            <person name="Yang Y."/>
            <person name="Ntziachristos P."/>
            <person name="Rothbart S."/>
            <person name="Buckley S."/>
            <person name="Dolgalev I."/>
            <person name="Stadtfeld M."/>
            <person name="Strahl B.D."/>
            <person name="Dynlacht B.D."/>
            <person name="Tsirigos A."/>
            <person name="Aifantis I."/>
        </authorList>
    </citation>
    <scope>SUBUNIT</scope>
</reference>
<dbReference type="EMBL" id="L49502">
    <property type="protein sequence ID" value="AAC42083.1"/>
    <property type="molecule type" value="mRNA"/>
</dbReference>
<dbReference type="EMBL" id="AK040205">
    <property type="protein sequence ID" value="BAC30540.1"/>
    <property type="molecule type" value="mRNA"/>
</dbReference>
<dbReference type="EMBL" id="AK040331">
    <property type="protein sequence ID" value="BAC30566.1"/>
    <property type="molecule type" value="mRNA"/>
</dbReference>
<dbReference type="EMBL" id="AK045101">
    <property type="protein sequence ID" value="BAC32223.1"/>
    <property type="molecule type" value="mRNA"/>
</dbReference>
<dbReference type="EMBL" id="AK083921">
    <property type="protein sequence ID" value="BAC39065.2"/>
    <property type="molecule type" value="mRNA"/>
</dbReference>
<dbReference type="EMBL" id="AK134990">
    <property type="protein sequence ID" value="BAE22373.1"/>
    <property type="molecule type" value="mRNA"/>
</dbReference>
<dbReference type="EMBL" id="AK148536">
    <property type="protein sequence ID" value="BAE28606.1"/>
    <property type="molecule type" value="mRNA"/>
</dbReference>
<dbReference type="EMBL" id="BC053910">
    <property type="protein sequence ID" value="AAH53910.1"/>
    <property type="status" value="ALT_SEQ"/>
    <property type="molecule type" value="mRNA"/>
</dbReference>
<dbReference type="EMBL" id="BC080719">
    <property type="protein sequence ID" value="AAH80719.1"/>
    <property type="molecule type" value="mRNA"/>
</dbReference>
<dbReference type="EMBL" id="AB093211">
    <property type="protein sequence ID" value="BAC41395.1"/>
    <property type="molecule type" value="Transcribed_RNA"/>
</dbReference>
<dbReference type="CCDS" id="CCDS21750.1">
    <molecule id="Q62018-1"/>
</dbReference>
<dbReference type="PIR" id="T42719">
    <property type="entry name" value="T42719"/>
</dbReference>
<dbReference type="RefSeq" id="NP_033457.2">
    <molecule id="Q62018-1"/>
    <property type="nucleotide sequence ID" value="NM_009431.2"/>
</dbReference>
<dbReference type="SMR" id="Q62018"/>
<dbReference type="BioGRID" id="204339">
    <property type="interactions" value="21"/>
</dbReference>
<dbReference type="FunCoup" id="Q62018">
    <property type="interactions" value="4368"/>
</dbReference>
<dbReference type="IntAct" id="Q62018">
    <property type="interactions" value="6"/>
</dbReference>
<dbReference type="MINT" id="Q62018"/>
<dbReference type="STRING" id="10090.ENSMUSP00000005749"/>
<dbReference type="iPTMnet" id="Q62018"/>
<dbReference type="PhosphoSitePlus" id="Q62018"/>
<dbReference type="jPOST" id="Q62018"/>
<dbReference type="PaxDb" id="10090-ENSMUSP00000005749"/>
<dbReference type="PeptideAtlas" id="Q62018"/>
<dbReference type="ProteomicsDB" id="285416">
    <molecule id="Q62018-1"/>
</dbReference>
<dbReference type="ProteomicsDB" id="285417">
    <molecule id="Q62018-2"/>
</dbReference>
<dbReference type="ProteomicsDB" id="285418">
    <molecule id="Q62018-3"/>
</dbReference>
<dbReference type="Pumba" id="Q62018"/>
<dbReference type="Antibodypedia" id="24416">
    <property type="antibodies" value="191 antibodies from 26 providers"/>
</dbReference>
<dbReference type="Ensembl" id="ENSMUST00000005749.6">
    <molecule id="Q62018-1"/>
    <property type="protein sequence ID" value="ENSMUSP00000005749.6"/>
    <property type="gene ID" value="ENSMUSG00000005609.17"/>
</dbReference>
<dbReference type="GeneID" id="22083"/>
<dbReference type="KEGG" id="mmu:22083"/>
<dbReference type="UCSC" id="uc009jfw.1">
    <molecule id="Q62018-2"/>
    <property type="organism name" value="mouse"/>
</dbReference>
<dbReference type="UCSC" id="uc009jfx.1">
    <molecule id="Q62018-1"/>
    <property type="organism name" value="mouse"/>
</dbReference>
<dbReference type="AGR" id="MGI:109345"/>
<dbReference type="CTD" id="9646"/>
<dbReference type="MGI" id="MGI:109345">
    <property type="gene designation" value="Ctr9"/>
</dbReference>
<dbReference type="VEuPathDB" id="HostDB:ENSMUSG00000005609"/>
<dbReference type="eggNOG" id="KOG2002">
    <property type="taxonomic scope" value="Eukaryota"/>
</dbReference>
<dbReference type="GeneTree" id="ENSGT00390000005097"/>
<dbReference type="HOGENOM" id="CLU_006386_0_0_1"/>
<dbReference type="InParanoid" id="Q62018"/>
<dbReference type="OMA" id="EHWLTIA"/>
<dbReference type="OrthoDB" id="343875at2759"/>
<dbReference type="PhylomeDB" id="Q62018"/>
<dbReference type="TreeFam" id="TF314342"/>
<dbReference type="Reactome" id="R-MMU-112382">
    <property type="pathway name" value="Formation of RNA Pol II elongation complex"/>
</dbReference>
<dbReference type="Reactome" id="R-MMU-674695">
    <property type="pathway name" value="RNA Polymerase II Pre-transcription Events"/>
</dbReference>
<dbReference type="Reactome" id="R-MMU-75955">
    <property type="pathway name" value="RNA Polymerase II Transcription Elongation"/>
</dbReference>
<dbReference type="Reactome" id="R-MMU-8866654">
    <property type="pathway name" value="E3 ubiquitin ligases ubiquitinate target proteins"/>
</dbReference>
<dbReference type="BioGRID-ORCS" id="22083">
    <property type="hits" value="26 hits in 81 CRISPR screens"/>
</dbReference>
<dbReference type="ChiTaRS" id="Ctr9">
    <property type="organism name" value="mouse"/>
</dbReference>
<dbReference type="PRO" id="PR:Q62018"/>
<dbReference type="Proteomes" id="UP000000589">
    <property type="component" value="Chromosome 7"/>
</dbReference>
<dbReference type="RNAct" id="Q62018">
    <property type="molecule type" value="protein"/>
</dbReference>
<dbReference type="Bgee" id="ENSMUSG00000005609">
    <property type="expression patterns" value="Expressed in placenta labyrinth and 266 other cell types or tissues"/>
</dbReference>
<dbReference type="GO" id="GO:0016593">
    <property type="term" value="C:Cdc73/Paf1 complex"/>
    <property type="evidence" value="ECO:0000250"/>
    <property type="project" value="UniProtKB"/>
</dbReference>
<dbReference type="GO" id="GO:0000791">
    <property type="term" value="C:euchromatin"/>
    <property type="evidence" value="ECO:0000314"/>
    <property type="project" value="UniProtKB"/>
</dbReference>
<dbReference type="GO" id="GO:0016607">
    <property type="term" value="C:nuclear speck"/>
    <property type="evidence" value="ECO:0007669"/>
    <property type="project" value="UniProtKB-SubCell"/>
</dbReference>
<dbReference type="GO" id="GO:0005634">
    <property type="term" value="C:nucleus"/>
    <property type="evidence" value="ECO:0000314"/>
    <property type="project" value="MGI"/>
</dbReference>
<dbReference type="GO" id="GO:0042169">
    <property type="term" value="F:SH2 domain binding"/>
    <property type="evidence" value="ECO:0000314"/>
    <property type="project" value="MGI"/>
</dbReference>
<dbReference type="GO" id="GO:0001832">
    <property type="term" value="P:blastocyst growth"/>
    <property type="evidence" value="ECO:0000315"/>
    <property type="project" value="MGI"/>
</dbReference>
<dbReference type="GO" id="GO:0001835">
    <property type="term" value="P:blastocyst hatching"/>
    <property type="evidence" value="ECO:0000315"/>
    <property type="project" value="MGI"/>
</dbReference>
<dbReference type="GO" id="GO:0007259">
    <property type="term" value="P:cell surface receptor signaling pathway via JAK-STAT"/>
    <property type="evidence" value="ECO:0000315"/>
    <property type="project" value="UniProtKB"/>
</dbReference>
<dbReference type="GO" id="GO:0071222">
    <property type="term" value="P:cellular response to lipopolysaccharide"/>
    <property type="evidence" value="ECO:0000314"/>
    <property type="project" value="UniProtKB"/>
</dbReference>
<dbReference type="GO" id="GO:0006325">
    <property type="term" value="P:chromatin organization"/>
    <property type="evidence" value="ECO:0000315"/>
    <property type="project" value="UniProtKB"/>
</dbReference>
<dbReference type="GO" id="GO:0001711">
    <property type="term" value="P:endodermal cell fate commitment"/>
    <property type="evidence" value="ECO:0000315"/>
    <property type="project" value="UniProtKB"/>
</dbReference>
<dbReference type="GO" id="GO:0001826">
    <property type="term" value="P:inner cell mass cell differentiation"/>
    <property type="evidence" value="ECO:0000315"/>
    <property type="project" value="MGI"/>
</dbReference>
<dbReference type="GO" id="GO:0070102">
    <property type="term" value="P:interleukin-6-mediated signaling pathway"/>
    <property type="evidence" value="ECO:0000315"/>
    <property type="project" value="UniProtKB"/>
</dbReference>
<dbReference type="GO" id="GO:0045814">
    <property type="term" value="P:negative regulation of gene expression, epigenetic"/>
    <property type="evidence" value="ECO:0000315"/>
    <property type="project" value="MGI"/>
</dbReference>
<dbReference type="GO" id="GO:0045638">
    <property type="term" value="P:negative regulation of myeloid cell differentiation"/>
    <property type="evidence" value="ECO:0000250"/>
    <property type="project" value="UniProtKB"/>
</dbReference>
<dbReference type="GO" id="GO:0000122">
    <property type="term" value="P:negative regulation of transcription by RNA polymerase II"/>
    <property type="evidence" value="ECO:0000315"/>
    <property type="project" value="UniProtKB"/>
</dbReference>
<dbReference type="GO" id="GO:0045944">
    <property type="term" value="P:positive regulation of transcription by RNA polymerase II"/>
    <property type="evidence" value="ECO:0007669"/>
    <property type="project" value="Ensembl"/>
</dbReference>
<dbReference type="GO" id="GO:0019827">
    <property type="term" value="P:stem cell population maintenance"/>
    <property type="evidence" value="ECO:0000315"/>
    <property type="project" value="UniProtKB"/>
</dbReference>
<dbReference type="GO" id="GO:0006368">
    <property type="term" value="P:transcription elongation by RNA polymerase II"/>
    <property type="evidence" value="ECO:0000250"/>
    <property type="project" value="UniProtKB"/>
</dbReference>
<dbReference type="GO" id="GO:0001829">
    <property type="term" value="P:trophectodermal cell differentiation"/>
    <property type="evidence" value="ECO:0000315"/>
    <property type="project" value="MGI"/>
</dbReference>
<dbReference type="GO" id="GO:0016055">
    <property type="term" value="P:Wnt signaling pathway"/>
    <property type="evidence" value="ECO:0007669"/>
    <property type="project" value="UniProtKB-KW"/>
</dbReference>
<dbReference type="FunFam" id="1.25.40.10:FF:000089">
    <property type="entry name" value="CTR9 homolog, Paf1/RNA polymerase II complex component"/>
    <property type="match status" value="1"/>
</dbReference>
<dbReference type="FunFam" id="1.25.40.10:FF:000162">
    <property type="entry name" value="CTR9 homolog, Paf1/RNA polymerase II complex component"/>
    <property type="match status" value="1"/>
</dbReference>
<dbReference type="FunFam" id="1.25.40.10:FF:001026">
    <property type="entry name" value="CTR9 homolog, Paf1/RNA polymerase II complex component"/>
    <property type="match status" value="1"/>
</dbReference>
<dbReference type="Gene3D" id="1.25.40.10">
    <property type="entry name" value="Tetratricopeptide repeat domain"/>
    <property type="match status" value="5"/>
</dbReference>
<dbReference type="InterPro" id="IPR031101">
    <property type="entry name" value="Ctr9"/>
</dbReference>
<dbReference type="InterPro" id="IPR011990">
    <property type="entry name" value="TPR-like_helical_dom_sf"/>
</dbReference>
<dbReference type="InterPro" id="IPR019734">
    <property type="entry name" value="TPR_rpt"/>
</dbReference>
<dbReference type="PANTHER" id="PTHR14027">
    <property type="entry name" value="RNA POLYMERASE-ASSOCIATED PROTEIN CTR9"/>
    <property type="match status" value="1"/>
</dbReference>
<dbReference type="PANTHER" id="PTHR14027:SF2">
    <property type="entry name" value="RNA POLYMERASE-ASSOCIATED PROTEIN CTR9 HOMOLOG"/>
    <property type="match status" value="1"/>
</dbReference>
<dbReference type="Pfam" id="PF13374">
    <property type="entry name" value="TPR_10"/>
    <property type="match status" value="1"/>
</dbReference>
<dbReference type="Pfam" id="PF14559">
    <property type="entry name" value="TPR_19"/>
    <property type="match status" value="2"/>
</dbReference>
<dbReference type="Pfam" id="PF13181">
    <property type="entry name" value="TPR_8"/>
    <property type="match status" value="2"/>
</dbReference>
<dbReference type="SMART" id="SM00028">
    <property type="entry name" value="TPR"/>
    <property type="match status" value="10"/>
</dbReference>
<dbReference type="SUPFAM" id="SSF81901">
    <property type="entry name" value="HCP-like"/>
    <property type="match status" value="1"/>
</dbReference>
<dbReference type="SUPFAM" id="SSF48452">
    <property type="entry name" value="TPR-like"/>
    <property type="match status" value="3"/>
</dbReference>
<dbReference type="PROSITE" id="PS50005">
    <property type="entry name" value="TPR"/>
    <property type="match status" value="10"/>
</dbReference>
<dbReference type="PROSITE" id="PS50293">
    <property type="entry name" value="TPR_REGION"/>
    <property type="match status" value="1"/>
</dbReference>
<feature type="chain" id="PRO_0000231589" description="RNA polymerase-associated protein CTR9 homolog">
    <location>
        <begin position="1"/>
        <end position="1173"/>
    </location>
</feature>
<feature type="repeat" description="TPR 1">
    <location>
        <begin position="41"/>
        <end position="75"/>
    </location>
</feature>
<feature type="repeat" description="TPR 2">
    <location>
        <begin position="129"/>
        <end position="162"/>
    </location>
</feature>
<feature type="repeat" description="TPR 3">
    <location>
        <begin position="163"/>
        <end position="196"/>
    </location>
</feature>
<feature type="repeat" description="TPR 4">
    <location>
        <begin position="198"/>
        <end position="231"/>
    </location>
</feature>
<feature type="repeat" description="TPR 5">
    <location>
        <begin position="235"/>
        <end position="268"/>
    </location>
</feature>
<feature type="repeat" description="TPR 6">
    <location>
        <begin position="306"/>
        <end position="339"/>
    </location>
</feature>
<feature type="repeat" description="TPR 7">
    <location>
        <begin position="341"/>
        <end position="374"/>
    </location>
</feature>
<feature type="repeat" description="TPR 8">
    <location>
        <begin position="412"/>
        <end position="444"/>
    </location>
</feature>
<feature type="repeat" description="TPR 9">
    <location>
        <begin position="451"/>
        <end position="484"/>
    </location>
</feature>
<feature type="repeat" description="TPR 10">
    <location>
        <begin position="497"/>
        <end position="530"/>
    </location>
</feature>
<feature type="repeat" description="TPR 11">
    <location>
        <begin position="531"/>
        <end position="564"/>
    </location>
</feature>
<feature type="repeat" description="TPR 12">
    <location>
        <begin position="566"/>
        <end position="598"/>
    </location>
</feature>
<feature type="repeat" description="TPR 13">
    <location>
        <begin position="613"/>
        <end position="646"/>
    </location>
</feature>
<feature type="repeat" description="TPR 14">
    <location>
        <begin position="647"/>
        <end position="680"/>
    </location>
</feature>
<feature type="repeat" description="TPR 15">
    <location>
        <begin position="681"/>
        <end position="714"/>
    </location>
</feature>
<feature type="repeat" description="TPR 16">
    <location>
        <begin position="717"/>
        <end position="750"/>
    </location>
</feature>
<feature type="region of interest" description="Disordered" evidence="2">
    <location>
        <begin position="892"/>
        <end position="1173"/>
    </location>
</feature>
<feature type="compositionally biased region" description="Basic residues" evidence="2">
    <location>
        <begin position="900"/>
        <end position="912"/>
    </location>
</feature>
<feature type="compositionally biased region" description="Acidic residues" evidence="2">
    <location>
        <begin position="917"/>
        <end position="929"/>
    </location>
</feature>
<feature type="compositionally biased region" description="Basic residues" evidence="2">
    <location>
        <begin position="980"/>
        <end position="994"/>
    </location>
</feature>
<feature type="compositionally biased region" description="Basic and acidic residues" evidence="2">
    <location>
        <begin position="1023"/>
        <end position="1034"/>
    </location>
</feature>
<feature type="compositionally biased region" description="Polar residues" evidence="2">
    <location>
        <begin position="1097"/>
        <end position="1128"/>
    </location>
</feature>
<feature type="compositionally biased region" description="Low complexity" evidence="2">
    <location>
        <begin position="1137"/>
        <end position="1159"/>
    </location>
</feature>
<feature type="compositionally biased region" description="Basic and acidic residues" evidence="2">
    <location>
        <begin position="1160"/>
        <end position="1173"/>
    </location>
</feature>
<feature type="modified residue" description="Phosphothreonine" evidence="12 13 14 15">
    <location>
        <position position="925"/>
    </location>
</feature>
<feature type="modified residue" description="Phosphoserine" evidence="1">
    <location>
        <position position="932"/>
    </location>
</feature>
<feature type="modified residue" description="Phosphoserine" evidence="15">
    <location>
        <position position="941"/>
    </location>
</feature>
<feature type="modified residue" description="Phosphoserine" evidence="1">
    <location>
        <position position="943"/>
    </location>
</feature>
<feature type="modified residue" description="Phosphoserine" evidence="15">
    <location>
        <position position="970"/>
    </location>
</feature>
<feature type="modified residue" description="Phosphoserine" evidence="1">
    <location>
        <position position="1020"/>
    </location>
</feature>
<feature type="modified residue" description="Phosphoserine" evidence="1">
    <location>
        <position position="1021"/>
    </location>
</feature>
<feature type="modified residue" description="Phosphoserine" evidence="15">
    <location>
        <position position="1037"/>
    </location>
</feature>
<feature type="modified residue" description="Phosphoserine" evidence="15">
    <location>
        <position position="1039"/>
    </location>
</feature>
<feature type="modified residue" description="Phosphoserine" evidence="15">
    <location>
        <position position="1041"/>
    </location>
</feature>
<feature type="modified residue" description="Phosphoserine" evidence="15">
    <location>
        <position position="1079"/>
    </location>
</feature>
<feature type="modified residue" description="Phosphoserine" evidence="15">
    <location>
        <position position="1083"/>
    </location>
</feature>
<feature type="modified residue" description="Phosphoserine" evidence="15">
    <location>
        <position position="1085"/>
    </location>
</feature>
<feature type="modified residue" description="Phosphoserine" evidence="1">
    <location>
        <position position="1095"/>
    </location>
</feature>
<feature type="modified residue" description="Phosphoserine" evidence="1">
    <location>
        <position position="1100"/>
    </location>
</feature>
<feature type="splice variant" id="VSP_017846" description="In isoform 2." evidence="10">
    <original>YENCLRKFYKHQNTEVVL</original>
    <variation>VTSLLLRIVACNVEPWLP</variation>
    <location>
        <begin position="704"/>
        <end position="721"/>
    </location>
</feature>
<feature type="splice variant" id="VSP_017847" description="In isoform 2." evidence="10">
    <location>
        <begin position="722"/>
        <end position="1173"/>
    </location>
</feature>
<feature type="splice variant" id="VSP_017848" description="In isoform 3." evidence="9">
    <location>
        <begin position="816"/>
        <end position="860"/>
    </location>
</feature>
<feature type="splice variant" id="VSP_017849" description="In isoform 3." evidence="9">
    <location>
        <begin position="995"/>
        <end position="1032"/>
    </location>
</feature>
<feature type="sequence conflict" description="In Ref. 1; AAC42083." evidence="11" ref="1">
    <original>K</original>
    <variation>Q</variation>
    <location>
        <position position="144"/>
    </location>
</feature>
<feature type="sequence conflict" description="In Ref. 3; AAH53910." evidence="11" ref="3">
    <original>R</original>
    <variation>S</variation>
    <location>
        <position position="223"/>
    </location>
</feature>
<feature type="sequence conflict" description="In Ref. 2; BAC32223." evidence="11" ref="2">
    <original>E</original>
    <variation>Q</variation>
    <location>
        <position position="242"/>
    </location>
</feature>
<feature type="sequence conflict" description="In Ref. 3; AAH53910." evidence="11" ref="3">
    <original>D</original>
    <variation>Y</variation>
    <location>
        <position position="390"/>
    </location>
</feature>
<feature type="sequence conflict" description="In Ref. 2; BAE22373." evidence="11" ref="2">
    <original>V</original>
    <variation>I</variation>
    <location>
        <position position="719"/>
    </location>
</feature>
<feature type="sequence conflict" description="In Ref. 3; AAH80719." evidence="11" ref="3">
    <original>Q</original>
    <variation>R</variation>
    <location>
        <position position="877"/>
    </location>
</feature>
<feature type="sequence conflict" description="In Ref. 3; AAH80719." evidence="11" ref="3">
    <original>E</original>
    <variation>K</variation>
    <location>
        <position position="900"/>
    </location>
</feature>
<name>CTR9_MOUSE</name>
<gene>
    <name type="primary">Ctr9</name>
    <name type="synonym">Kiaa0155</name>
    <name type="synonym">Sh2bp1</name>
</gene>
<comment type="function">
    <text evidence="1 4 5">Component of the PAF1 complex (PAF1C) which has multiple functions during transcription by RNA polymerase II and is implicated in regulation of development and maintenance of embryonic stem cell pluripotency. PAF1C associates with RNA polymerase II through interaction with POLR2A CTD non-phosphorylated and 'Ser-2'- and 'Ser-5'-phosphorylated forms and is involved in transcriptional elongation, acting both independently and synergistically with TCEA1 and in cooperation with the DSIF complex and HTATSF1. PAF1C is required for transcription of Hox and Wnt target genes. PAF1C is involved in hematopoiesis and stimulates transcriptional activity of KMT2A/MLL1. PAF1C is involved in histone modifications such as ubiquitination of histone H2B and methylation on histone H3 'Lys-4' (H3K4me3). PAF1C recruits the RNF20/40 E3 ubiquitin-protein ligase complex and the E2 enzyme UBE2A or UBE2B to chromatin which mediate monoubiquitination of 'Lys-120' of histone H2B (H2BK120ub1); UB2A/B-mediated H2B ubiquitination is proposed to be coupled to transcription. PAF1C is involved in mRNA 3' end formation probably through association with cleavage and poly(A) factors. Required for mono- and trimethylation on histone H3 'Lys-4' (H3K4me3) and dimethylation on histone H3 'Lys-79' (H3K4me3). Required for Hox gene transcription (By similarity). Required for the trimethylation of histone H3 'Lys-4' (H3K4me3) on genes involved in stem cell pluripotency; this function is synergistic with CXXC1 indicative for an involvement of the SET1 complex. Involved in transcriptional regulation of IL6-responsive genes and in JAK-STAT pathway; may regulate DNA-association of STAT3.</text>
</comment>
<comment type="subunit">
    <text evidence="1 4 6 7">Component of the PAF1 complex, which consists of CDC73, PAF1, LEO1, CTR9, RTF1 and SKIC8 (By similarity). The PAF1 complex interacts with PHF5A (PubMed:27749823). Interacts with KMT2A/MLL1 (By similarity). Interacts with STAT3 (PubMed:17911113). Interacts with SETD5 (PubMed:27864380). Interacts with ERCC6 (By similarity).</text>
</comment>
<comment type="subcellular location">
    <subcellularLocation>
        <location evidence="8">Nucleus speckle</location>
    </subcellularLocation>
</comment>
<comment type="alternative products">
    <event type="alternative splicing"/>
    <isoform>
        <id>Q62018-1</id>
        <name>1</name>
        <sequence type="displayed"/>
    </isoform>
    <isoform>
        <id>Q62018-2</id>
        <name>2</name>
        <sequence type="described" ref="VSP_017846 VSP_017847"/>
    </isoform>
    <isoform>
        <id>Q62018-3</id>
        <name>3</name>
        <sequence type="described" ref="VSP_017848 VSP_017849"/>
    </isoform>
</comment>
<comment type="tissue specificity">
    <text evidence="3">Widely expressed.</text>
</comment>
<comment type="sequence caution" evidence="11">
    <conflict type="miscellaneous discrepancy">
        <sequence resource="EMBL-CDS" id="AAH53910"/>
    </conflict>
    <text>Contaminating sequence. Potential poly-A sequence starting in position 937.</text>
</comment>
<sequence length="1173" mass="133408">MSRGSIEIPLRDTDEVIELDFDQLPEGDEVISILKQEHTQLHIWIALALEYYKQGKTEEFVKLLEAARIDGNLDYRDHEKDQMTCLDTLAAYYVQQARKEKNKDNKKDLITQATLLYTMADKIIMYDQNHLLGRACFCLLEGDKMDQADAQFHFVLNQSPNNIPALLGKACISFNKKDYRGALAYYKKALRTNPGCPAEVRLGMGHCFVKLNKLEKARLAFSRALELNSKCVGALVGLAVLELNNKEADSIKNGVQLLSRAYTIDPSNPMVLNHLANHFFFKKDYSKVQHLALHAFHNTEVEAMQAESCYQLARSFHVQEDYDQAFQYYYQATQFASSSFVLPFFGLGQMYIYRGDKENASQCFEKVLKAYPNNYETMKILGSLYAASEDQEKRDIAKGHLKKVTEQYPDDVEAWIELAQILEQTDIQGALSAYGTATRILQEKVQADVPPEILNNVGALHFRLGNLGEAKKYFLASLDRAKAEAEHDEHYYNAISVTTSYNLARLYEAMCEFHEAEKLYKNILREHPNYVDCYLRLGAMARDKGNFYEASDWFKEALQINQDHPDAWSLIGNLHLAKQEWGPGQKKFERILKQPATQSDTYSMLALGNVWLQTLHQPTRDREKEKRHQDRALAIYKQVLRNDAKNLYAANGIGAVLAHKGYFREARDVFAQVREATADISDVWLNLAHIYVEQKQYISAVQMYENCLRKFYKHQNTEVVLYLARALFKCGKLQECKQTLLKARHVAPSDTVLMFNVALVLQRLATSVLKDEKSNLKEVLNAVKELELAHRYFSYLSKVGDKMRFDLALAASEARQCSDLLSQAQYHVARARKQDEEERELRAKQEQEKELLRQKLLKEQEEKRLREKEEQKKLLEQRAQYVEKTKNILMFTGETEATKEKKRGGGGGRRSKKGGEFDEFVNDDTDDDLPVSKKKKRRKGSGSEQEGEEEEGGERKKKRRRRPPKGEEGSEEEETENGPKPKKRRPPRAEKKKAPKPERLPPSMKGKIKSKAIISSSDDSSDEDKLKIADEGHPRNSNSDSDDDERPNRRASSESDSDDNQNKSGSEAGSPRRSGRQESDEDSDSDQPSRKRRRSGSEQSDNESVQSGRSPSGASENENDSRPASPSAESDHESEQGSDNEGSGQGSGNESEPEGSNNEASDRGSEHGSDDSD</sequence>
<keyword id="KW-0025">Alternative splicing</keyword>
<keyword id="KW-0539">Nucleus</keyword>
<keyword id="KW-0597">Phosphoprotein</keyword>
<keyword id="KW-1185">Reference proteome</keyword>
<keyword id="KW-0677">Repeat</keyword>
<keyword id="KW-0802">TPR repeat</keyword>
<keyword id="KW-0804">Transcription</keyword>
<keyword id="KW-0805">Transcription regulation</keyword>
<keyword id="KW-0879">Wnt signaling pathway</keyword>
<organism>
    <name type="scientific">Mus musculus</name>
    <name type="common">Mouse</name>
    <dbReference type="NCBI Taxonomy" id="10090"/>
    <lineage>
        <taxon>Eukaryota</taxon>
        <taxon>Metazoa</taxon>
        <taxon>Chordata</taxon>
        <taxon>Craniata</taxon>
        <taxon>Vertebrata</taxon>
        <taxon>Euteleostomi</taxon>
        <taxon>Mammalia</taxon>
        <taxon>Eutheria</taxon>
        <taxon>Euarchontoglires</taxon>
        <taxon>Glires</taxon>
        <taxon>Rodentia</taxon>
        <taxon>Myomorpha</taxon>
        <taxon>Muroidea</taxon>
        <taxon>Muridae</taxon>
        <taxon>Murinae</taxon>
        <taxon>Mus</taxon>
        <taxon>Mus</taxon>
    </lineage>
</organism>
<protein>
    <recommendedName>
        <fullName>RNA polymerase-associated protein CTR9 homolog</fullName>
    </recommendedName>
    <alternativeName>
        <fullName>SH2 domain-binding protein 1</fullName>
    </alternativeName>
    <alternativeName>
        <fullName>Tetratricopeptide repeat-containing, SH2-binding phosphoprotein of 150 kDa</fullName>
        <shortName>TPR-containing, SH2-binding phosphoprotein of 150 kDa</shortName>
        <shortName>p150TSP</shortName>
    </alternativeName>
</protein>
<evidence type="ECO:0000250" key="1">
    <source>
        <dbReference type="UniProtKB" id="Q6PD62"/>
    </source>
</evidence>
<evidence type="ECO:0000256" key="2">
    <source>
        <dbReference type="SAM" id="MobiDB-lite"/>
    </source>
</evidence>
<evidence type="ECO:0000269" key="3">
    <source>
    </source>
</evidence>
<evidence type="ECO:0000269" key="4">
    <source>
    </source>
</evidence>
<evidence type="ECO:0000269" key="5">
    <source>
    </source>
</evidence>
<evidence type="ECO:0000269" key="6">
    <source>
    </source>
</evidence>
<evidence type="ECO:0000269" key="7">
    <source>
    </source>
</evidence>
<evidence type="ECO:0000269" key="8">
    <source>
    </source>
</evidence>
<evidence type="ECO:0000303" key="9">
    <source>
    </source>
</evidence>
<evidence type="ECO:0000303" key="10">
    <source>
    </source>
</evidence>
<evidence type="ECO:0000305" key="11"/>
<evidence type="ECO:0007744" key="12">
    <source>
    </source>
</evidence>
<evidence type="ECO:0007744" key="13">
    <source>
    </source>
</evidence>
<evidence type="ECO:0007744" key="14">
    <source>
    </source>
</evidence>
<evidence type="ECO:0007744" key="15">
    <source>
    </source>
</evidence>
<proteinExistence type="evidence at protein level"/>
<accession>Q62018</accession>
<accession>Q3UFF5</accession>
<accession>Q3UY40</accession>
<accession>Q66JX4</accession>
<accession>Q7TPS6</accession>
<accession>Q8BND9</accession>
<accession>Q8BRD1</accession>
<accession>Q8C9W7</accession>
<accession>Q8C9Y3</accession>
<accession>Q8CHI1</accession>